<keyword id="KW-0002">3D-structure</keyword>
<keyword id="KW-0053">Apoptosis</keyword>
<keyword id="KW-0496">Mitochondrion</keyword>
<keyword id="KW-1185">Reference proteome</keyword>
<keyword id="KW-0677">Repeat</keyword>
<evidence type="ECO:0000250" key="1"/>
<evidence type="ECO:0000250" key="2">
    <source>
        <dbReference type="UniProtKB" id="Q13794"/>
    </source>
</evidence>
<evidence type="ECO:0000269" key="3">
    <source>
    </source>
</evidence>
<evidence type="ECO:0000269" key="4">
    <source>
    </source>
</evidence>
<evidence type="ECO:0000269" key="5">
    <source>
    </source>
</evidence>
<evidence type="ECO:0000269" key="6">
    <source>
    </source>
</evidence>
<evidence type="ECO:0000269" key="7">
    <source>
    </source>
</evidence>
<evidence type="ECO:0000305" key="8"/>
<evidence type="ECO:0007829" key="9">
    <source>
        <dbReference type="PDB" id="2NLA"/>
    </source>
</evidence>
<evidence type="ECO:0007829" key="10">
    <source>
        <dbReference type="PDB" id="2ROD"/>
    </source>
</evidence>
<gene>
    <name type="primary">Pmaip1</name>
    <name type="synonym">Noxa</name>
</gene>
<feature type="chain" id="PRO_0000333230" description="Phorbol-12-myristate-13-acetate-induced protein 1">
    <location>
        <begin position="1"/>
        <end position="103"/>
    </location>
</feature>
<feature type="region of interest" description="Required for mitochondrial location" evidence="1">
    <location>
        <begin position="90"/>
        <end position="99"/>
    </location>
</feature>
<feature type="short sequence motif" description="BH3 1">
    <location>
        <begin position="27"/>
        <end position="35"/>
    </location>
</feature>
<feature type="short sequence motif" description="BH3 2">
    <location>
        <begin position="78"/>
        <end position="86"/>
    </location>
</feature>
<feature type="mutagenesis site" description="Loss of pro-apoptotic activity and of targeting to mitochondria; when associated with A-78." evidence="3">
    <original>L</original>
    <variation>A</variation>
    <location>
        <position position="27"/>
    </location>
</feature>
<feature type="mutagenesis site" description="Loss of pro-apoptotic activity and of targeting to mitochondria; when associated with A-27." evidence="3">
    <original>L</original>
    <variation>A</variation>
    <location>
        <position position="78"/>
    </location>
</feature>
<feature type="helix" evidence="10">
    <location>
        <begin position="22"/>
        <end position="39"/>
    </location>
</feature>
<feature type="helix" evidence="9">
    <location>
        <begin position="77"/>
        <end position="90"/>
    </location>
</feature>
<name>APR_MOUSE</name>
<reference key="1">
    <citation type="journal article" date="2000" name="Science">
        <title>Noxa, a BH3-only member of the Bcl-2 family and candidate mediator of p53-induced apoptosis.</title>
        <authorList>
            <person name="Oda E."/>
            <person name="Ohki R."/>
            <person name="Murasawa H."/>
            <person name="Nemoto J."/>
            <person name="Shibue T."/>
            <person name="Yamashita T."/>
            <person name="Tokino T."/>
            <person name="Taniguchi T."/>
            <person name="Tanaka N."/>
        </authorList>
    </citation>
    <scope>NUCLEOTIDE SEQUENCE [MRNA]</scope>
    <scope>INTERACTION WITH MCL1</scope>
    <scope>SUBCELLULAR LOCATION</scope>
    <scope>FUNCTION</scope>
    <scope>MUTAGENESIS OF LEU-27 AND LEU-78</scope>
</reference>
<reference key="2">
    <citation type="journal article" date="2005" name="Science">
        <title>The transcriptional landscape of the mammalian genome.</title>
        <authorList>
            <person name="Carninci P."/>
            <person name="Kasukawa T."/>
            <person name="Katayama S."/>
            <person name="Gough J."/>
            <person name="Frith M.C."/>
            <person name="Maeda N."/>
            <person name="Oyama R."/>
            <person name="Ravasi T."/>
            <person name="Lenhard B."/>
            <person name="Wells C."/>
            <person name="Kodzius R."/>
            <person name="Shimokawa K."/>
            <person name="Bajic V.B."/>
            <person name="Brenner S.E."/>
            <person name="Batalov S."/>
            <person name="Forrest A.R."/>
            <person name="Zavolan M."/>
            <person name="Davis M.J."/>
            <person name="Wilming L.G."/>
            <person name="Aidinis V."/>
            <person name="Allen J.E."/>
            <person name="Ambesi-Impiombato A."/>
            <person name="Apweiler R."/>
            <person name="Aturaliya R.N."/>
            <person name="Bailey T.L."/>
            <person name="Bansal M."/>
            <person name="Baxter L."/>
            <person name="Beisel K.W."/>
            <person name="Bersano T."/>
            <person name="Bono H."/>
            <person name="Chalk A.M."/>
            <person name="Chiu K.P."/>
            <person name="Choudhary V."/>
            <person name="Christoffels A."/>
            <person name="Clutterbuck D.R."/>
            <person name="Crowe M.L."/>
            <person name="Dalla E."/>
            <person name="Dalrymple B.P."/>
            <person name="de Bono B."/>
            <person name="Della Gatta G."/>
            <person name="di Bernardo D."/>
            <person name="Down T."/>
            <person name="Engstrom P."/>
            <person name="Fagiolini M."/>
            <person name="Faulkner G."/>
            <person name="Fletcher C.F."/>
            <person name="Fukushima T."/>
            <person name="Furuno M."/>
            <person name="Futaki S."/>
            <person name="Gariboldi M."/>
            <person name="Georgii-Hemming P."/>
            <person name="Gingeras T.R."/>
            <person name="Gojobori T."/>
            <person name="Green R.E."/>
            <person name="Gustincich S."/>
            <person name="Harbers M."/>
            <person name="Hayashi Y."/>
            <person name="Hensch T.K."/>
            <person name="Hirokawa N."/>
            <person name="Hill D."/>
            <person name="Huminiecki L."/>
            <person name="Iacono M."/>
            <person name="Ikeo K."/>
            <person name="Iwama A."/>
            <person name="Ishikawa T."/>
            <person name="Jakt M."/>
            <person name="Kanapin A."/>
            <person name="Katoh M."/>
            <person name="Kawasawa Y."/>
            <person name="Kelso J."/>
            <person name="Kitamura H."/>
            <person name="Kitano H."/>
            <person name="Kollias G."/>
            <person name="Krishnan S.P."/>
            <person name="Kruger A."/>
            <person name="Kummerfeld S.K."/>
            <person name="Kurochkin I.V."/>
            <person name="Lareau L.F."/>
            <person name="Lazarevic D."/>
            <person name="Lipovich L."/>
            <person name="Liu J."/>
            <person name="Liuni S."/>
            <person name="McWilliam S."/>
            <person name="Madan Babu M."/>
            <person name="Madera M."/>
            <person name="Marchionni L."/>
            <person name="Matsuda H."/>
            <person name="Matsuzawa S."/>
            <person name="Miki H."/>
            <person name="Mignone F."/>
            <person name="Miyake S."/>
            <person name="Morris K."/>
            <person name="Mottagui-Tabar S."/>
            <person name="Mulder N."/>
            <person name="Nakano N."/>
            <person name="Nakauchi H."/>
            <person name="Ng P."/>
            <person name="Nilsson R."/>
            <person name="Nishiguchi S."/>
            <person name="Nishikawa S."/>
            <person name="Nori F."/>
            <person name="Ohara O."/>
            <person name="Okazaki Y."/>
            <person name="Orlando V."/>
            <person name="Pang K.C."/>
            <person name="Pavan W.J."/>
            <person name="Pavesi G."/>
            <person name="Pesole G."/>
            <person name="Petrovsky N."/>
            <person name="Piazza S."/>
            <person name="Reed J."/>
            <person name="Reid J.F."/>
            <person name="Ring B.Z."/>
            <person name="Ringwald M."/>
            <person name="Rost B."/>
            <person name="Ruan Y."/>
            <person name="Salzberg S.L."/>
            <person name="Sandelin A."/>
            <person name="Schneider C."/>
            <person name="Schoenbach C."/>
            <person name="Sekiguchi K."/>
            <person name="Semple C.A."/>
            <person name="Seno S."/>
            <person name="Sessa L."/>
            <person name="Sheng Y."/>
            <person name="Shibata Y."/>
            <person name="Shimada H."/>
            <person name="Shimada K."/>
            <person name="Silva D."/>
            <person name="Sinclair B."/>
            <person name="Sperling S."/>
            <person name="Stupka E."/>
            <person name="Sugiura K."/>
            <person name="Sultana R."/>
            <person name="Takenaka Y."/>
            <person name="Taki K."/>
            <person name="Tammoja K."/>
            <person name="Tan S.L."/>
            <person name="Tang S."/>
            <person name="Taylor M.S."/>
            <person name="Tegner J."/>
            <person name="Teichmann S.A."/>
            <person name="Ueda H.R."/>
            <person name="van Nimwegen E."/>
            <person name="Verardo R."/>
            <person name="Wei C.L."/>
            <person name="Yagi K."/>
            <person name="Yamanishi H."/>
            <person name="Zabarovsky E."/>
            <person name="Zhu S."/>
            <person name="Zimmer A."/>
            <person name="Hide W."/>
            <person name="Bult C."/>
            <person name="Grimmond S.M."/>
            <person name="Teasdale R.D."/>
            <person name="Liu E.T."/>
            <person name="Brusic V."/>
            <person name="Quackenbush J."/>
            <person name="Wahlestedt C."/>
            <person name="Mattick J.S."/>
            <person name="Hume D.A."/>
            <person name="Kai C."/>
            <person name="Sasaki D."/>
            <person name="Tomaru Y."/>
            <person name="Fukuda S."/>
            <person name="Kanamori-Katayama M."/>
            <person name="Suzuki M."/>
            <person name="Aoki J."/>
            <person name="Arakawa T."/>
            <person name="Iida J."/>
            <person name="Imamura K."/>
            <person name="Itoh M."/>
            <person name="Kato T."/>
            <person name="Kawaji H."/>
            <person name="Kawagashira N."/>
            <person name="Kawashima T."/>
            <person name="Kojima M."/>
            <person name="Kondo S."/>
            <person name="Konno H."/>
            <person name="Nakano K."/>
            <person name="Ninomiya N."/>
            <person name="Nishio T."/>
            <person name="Okada M."/>
            <person name="Plessy C."/>
            <person name="Shibata K."/>
            <person name="Shiraki T."/>
            <person name="Suzuki S."/>
            <person name="Tagami M."/>
            <person name="Waki K."/>
            <person name="Watahiki A."/>
            <person name="Okamura-Oho Y."/>
            <person name="Suzuki H."/>
            <person name="Kawai J."/>
            <person name="Hayashizaki Y."/>
        </authorList>
    </citation>
    <scope>NUCLEOTIDE SEQUENCE [LARGE SCALE MRNA]</scope>
    <source>
        <strain>C57BL/6J</strain>
        <strain>NOD</strain>
        <tissue>Brain cortex</tissue>
        <tissue>Dendritic cell</tissue>
        <tissue>Kidney</tissue>
        <tissue>Thymus</tissue>
    </source>
</reference>
<reference key="3">
    <citation type="journal article" date="2004" name="Genome Res.">
        <title>The status, quality, and expansion of the NIH full-length cDNA project: the Mammalian Gene Collection (MGC).</title>
        <authorList>
            <consortium name="The MGC Project Team"/>
        </authorList>
    </citation>
    <scope>NUCLEOTIDE SEQUENCE [LARGE SCALE MRNA]</scope>
    <source>
        <tissue>Limb</tissue>
    </source>
</reference>
<reference key="4">
    <citation type="journal article" date="2005" name="Genes Dev.">
        <title>Proapoptotic Bak is sequestered by Mcl-1 and Bcl-xL, but not Bcl-2, until displaced by BH3-only proteins.</title>
        <authorList>
            <person name="Willis S.N."/>
            <person name="Chen L."/>
            <person name="Dewson G."/>
            <person name="Wei A."/>
            <person name="Naik E."/>
            <person name="Fletcher J.I."/>
            <person name="Adams J.M."/>
            <person name="Huang D.C.S."/>
        </authorList>
    </citation>
    <scope>FUNCTION</scope>
    <scope>INTERACTION WITH MCL1</scope>
</reference>
<reference key="5">
    <citation type="journal article" date="2005" name="Mol. Cell">
        <title>Differential targeting of prosurvival Bcl-2 proteins by their BH3-only ligands allows complementary apoptotic function.</title>
        <authorList>
            <person name="Chen L."/>
            <person name="Willis S.N."/>
            <person name="Wei A."/>
            <person name="Smith B.J."/>
            <person name="Fletcher J.I."/>
            <person name="Hinds M.G."/>
            <person name="Colman P.M."/>
            <person name="Day C.L."/>
            <person name="Adams J.M."/>
            <person name="Huang D.C.S."/>
        </authorList>
    </citation>
    <scope>FUNCTION</scope>
    <scope>INTERACTION WITH MCL1</scope>
</reference>
<reference key="6">
    <citation type="journal article" date="2006" name="J. Neurosci.">
        <title>BH3-only proapoptotic Bcl-2 family members Noxa and Puma mediate neural precursor cell death.</title>
        <authorList>
            <person name="Akhtar R.S."/>
            <person name="Geng Y."/>
            <person name="Klocke B.J."/>
            <person name="Latham C.B."/>
            <person name="Villunger A."/>
            <person name="Michalak E.M."/>
            <person name="Strasser A."/>
            <person name="Carroll S.L."/>
            <person name="Roth K.A."/>
        </authorList>
    </citation>
    <scope>FUNCTION</scope>
    <scope>INDUCTION</scope>
    <scope>TISSUE SPECIFICITY</scope>
</reference>
<reference key="7">
    <citation type="journal article" date="2007" name="Proc. Natl. Acad. Sci. U.S.A.">
        <title>Structural insights into the degradation of Mcl-1 induced by BH3 domains.</title>
        <authorList>
            <person name="Czabotar P.E."/>
            <person name="Lee E.F."/>
            <person name="van Delft M.F."/>
            <person name="Day C.L."/>
            <person name="Smith B.J."/>
            <person name="Huang D.C.S."/>
            <person name="Fairlie W.D."/>
            <person name="Hinds M.G."/>
            <person name="Colman P.M."/>
        </authorList>
    </citation>
    <scope>X-RAY CRYSTALLOGRAPHY (2.8 ANGSTROMS) OF 68-93 IN COMPLEX WITH MCL1</scope>
    <scope>STRUCTURE BY NMR OF 68-94 IN COMPLEX WITH MCL1</scope>
    <scope>FUNCTION</scope>
    <scope>INTERACTION WITH MCL1</scope>
    <scope>IDENTIFICATION BY MASS SPECTROMETRY</scope>
</reference>
<proteinExistence type="evidence at protein level"/>
<organism>
    <name type="scientific">Mus musculus</name>
    <name type="common">Mouse</name>
    <dbReference type="NCBI Taxonomy" id="10090"/>
    <lineage>
        <taxon>Eukaryota</taxon>
        <taxon>Metazoa</taxon>
        <taxon>Chordata</taxon>
        <taxon>Craniata</taxon>
        <taxon>Vertebrata</taxon>
        <taxon>Euteleostomi</taxon>
        <taxon>Mammalia</taxon>
        <taxon>Eutheria</taxon>
        <taxon>Euarchontoglires</taxon>
        <taxon>Glires</taxon>
        <taxon>Rodentia</taxon>
        <taxon>Myomorpha</taxon>
        <taxon>Muroidea</taxon>
        <taxon>Muridae</taxon>
        <taxon>Murinae</taxon>
        <taxon>Mus</taxon>
        <taxon>Mus</taxon>
    </lineage>
</organism>
<sequence length="103" mass="11566">MPGRKARRNAPVNPTRAELPPEFAAQLRKIGDKVYCTWSAPDITVVLAQMPGKSQKSRMRSPSPTRVPADLKDECAQLRRIGDKVNLRQKLLNLISKLFNLVT</sequence>
<comment type="function">
    <text evidence="1 3 4 5 6 7">Promotes activation of caspases and apoptosis. Promotes mitochondrial membrane changes and efflux of apoptogenic proteins from the mitochondria. Contributes to p53/TP53-dependent apoptosis after radiation exposure. Promotes proteasomal degradation of MCL1. Competes with BIM/BCL2L11 for binding to MCL1 and can displace BIM/BCL2L11 from its binding site on MCL1 (By similarity). Competes with BAK1 for binding to MCL1 and can displace BAK1 from its binding site on MCL1.</text>
</comment>
<comment type="subunit">
    <text evidence="2 3 4 5 7">Interacts with MCL1 (PubMed:10807576, PubMed:15694340, PubMed:15901672, PubMed:17389404). Interacts with BCL2A1 (By similarity). Interacts with BAX (By similarity). Interacts with BCL2L10 (By similarity).</text>
</comment>
<comment type="interaction">
    <interactant intactId="EBI-709183">
        <id>Q9JM54</id>
    </interactant>
    <interactant intactId="EBI-707292">
        <id>P97287</id>
        <label>Mcl1</label>
    </interactant>
    <organismsDiffer>false</organismsDiffer>
    <experiments>14</experiments>
</comment>
<comment type="interaction">
    <interactant intactId="EBI-709183">
        <id>Q9JM54</id>
    </interactant>
    <interactant intactId="EBI-1003422">
        <id>Q07820</id>
        <label>MCL1</label>
    </interactant>
    <organismsDiffer>true</organismsDiffer>
    <experiments>2</experiments>
</comment>
<comment type="subcellular location">
    <subcellularLocation>
        <location evidence="3">Mitochondrion</location>
    </subcellularLocation>
</comment>
<comment type="tissue specificity">
    <text evidence="6">Detected in thymocytes after irradiation with X-rays. Not detectable in untreated thymocytes (at protein level). Detected in embryonic neural precursor cells of the telencephalon Constitutively expressed at low levels in adult brain, testis, thymus, spleen, lung and kidney.</text>
</comment>
<comment type="induction">
    <text evidence="6">Up-regulated after exposure to ionizing radiation and other genotoxic agents. Up-regulation is mediated by p53.</text>
</comment>
<comment type="domain">
    <text>The BH3 motif is essential for pro-apoptotic activity.</text>
</comment>
<comment type="similarity">
    <text evidence="8">Belongs to the PMAIP1 family.</text>
</comment>
<dbReference type="EMBL" id="AB041230">
    <property type="protein sequence ID" value="BAA95781.1"/>
    <property type="molecule type" value="mRNA"/>
</dbReference>
<dbReference type="EMBL" id="AK043856">
    <property type="protein sequence ID" value="BAC31682.1"/>
    <property type="molecule type" value="mRNA"/>
</dbReference>
<dbReference type="EMBL" id="AK088556">
    <property type="protein sequence ID" value="BAC40421.1"/>
    <property type="molecule type" value="mRNA"/>
</dbReference>
<dbReference type="EMBL" id="AK143990">
    <property type="protein sequence ID" value="BAE25650.1"/>
    <property type="molecule type" value="mRNA"/>
</dbReference>
<dbReference type="EMBL" id="AK169914">
    <property type="protein sequence ID" value="BAE41454.1"/>
    <property type="molecule type" value="mRNA"/>
</dbReference>
<dbReference type="EMBL" id="BC050821">
    <property type="protein sequence ID" value="AAH50821.1"/>
    <property type="molecule type" value="mRNA"/>
</dbReference>
<dbReference type="CCDS" id="CCDS29315.1"/>
<dbReference type="RefSeq" id="NP_067426.1">
    <property type="nucleotide sequence ID" value="NM_021451.2"/>
</dbReference>
<dbReference type="PDB" id="2JM6">
    <property type="method" value="NMR"/>
    <property type="chains" value="A=68-93"/>
</dbReference>
<dbReference type="PDB" id="2NLA">
    <property type="method" value="X-ray"/>
    <property type="resolution" value="2.80 A"/>
    <property type="chains" value="B=68-93"/>
</dbReference>
<dbReference type="PDB" id="2ROD">
    <property type="method" value="NMR"/>
    <property type="chains" value="B=17-42"/>
</dbReference>
<dbReference type="PDBsum" id="2JM6"/>
<dbReference type="PDBsum" id="2NLA"/>
<dbReference type="PDBsum" id="2ROD"/>
<dbReference type="SMR" id="Q9JM54"/>
<dbReference type="BioGRID" id="208439">
    <property type="interactions" value="2"/>
</dbReference>
<dbReference type="ComplexPortal" id="CPX-305">
    <property type="entry name" value="MCL1:PMAIP1 complex"/>
</dbReference>
<dbReference type="DIP" id="DIP-45232N"/>
<dbReference type="ELM" id="Q9JM54"/>
<dbReference type="FunCoup" id="Q9JM54">
    <property type="interactions" value="72"/>
</dbReference>
<dbReference type="IntAct" id="Q9JM54">
    <property type="interactions" value="4"/>
</dbReference>
<dbReference type="MINT" id="Q9JM54"/>
<dbReference type="STRING" id="10090.ENSMUSP00000025399"/>
<dbReference type="iPTMnet" id="Q9JM54"/>
<dbReference type="PhosphoSitePlus" id="Q9JM54"/>
<dbReference type="PaxDb" id="10090-ENSMUSP00000025399"/>
<dbReference type="DNASU" id="58801"/>
<dbReference type="Ensembl" id="ENSMUST00000025399.9">
    <property type="protein sequence ID" value="ENSMUSP00000025399.8"/>
    <property type="gene ID" value="ENSMUSG00000024521.9"/>
</dbReference>
<dbReference type="GeneID" id="58801"/>
<dbReference type="KEGG" id="mmu:58801"/>
<dbReference type="UCSC" id="uc008fft.1">
    <property type="organism name" value="mouse"/>
</dbReference>
<dbReference type="AGR" id="MGI:1930146"/>
<dbReference type="CTD" id="5366"/>
<dbReference type="MGI" id="MGI:1930146">
    <property type="gene designation" value="Pmaip1"/>
</dbReference>
<dbReference type="VEuPathDB" id="HostDB:ENSMUSG00000024521"/>
<dbReference type="eggNOG" id="ENOG502SEAE">
    <property type="taxonomic scope" value="Eukaryota"/>
</dbReference>
<dbReference type="GeneTree" id="ENSGT00530000065105"/>
<dbReference type="HOGENOM" id="CLU_2262862_0_0_1"/>
<dbReference type="InParanoid" id="Q9JM54"/>
<dbReference type="OMA" id="YCTWSAP"/>
<dbReference type="OrthoDB" id="8793015at2759"/>
<dbReference type="TreeFam" id="TF339379"/>
<dbReference type="Reactome" id="R-MMU-111448">
    <property type="pathway name" value="Activation of NOXA and translocation to mitochondria"/>
</dbReference>
<dbReference type="Reactome" id="R-MMU-111453">
    <property type="pathway name" value="BH3-only proteins associate with and inactivate anti-apoptotic BCL-2 members"/>
</dbReference>
<dbReference type="BioGRID-ORCS" id="58801">
    <property type="hits" value="3 hits in 81 CRISPR screens"/>
</dbReference>
<dbReference type="ChiTaRS" id="Pmaip1">
    <property type="organism name" value="mouse"/>
</dbReference>
<dbReference type="EvolutionaryTrace" id="Q9JM54"/>
<dbReference type="PRO" id="PR:Q9JM54"/>
<dbReference type="Proteomes" id="UP000000589">
    <property type="component" value="Chromosome 18"/>
</dbReference>
<dbReference type="RNAct" id="Q9JM54">
    <property type="molecule type" value="protein"/>
</dbReference>
<dbReference type="Bgee" id="ENSMUSG00000024521">
    <property type="expression patterns" value="Expressed in gastrula and 147 other cell types or tissues"/>
</dbReference>
<dbReference type="ExpressionAtlas" id="Q9JM54">
    <property type="expression patterns" value="baseline and differential"/>
</dbReference>
<dbReference type="GO" id="GO:0097136">
    <property type="term" value="C:Bcl-2 family protein complex"/>
    <property type="evidence" value="ECO:0000303"/>
    <property type="project" value="ComplexPortal"/>
</dbReference>
<dbReference type="GO" id="GO:0005739">
    <property type="term" value="C:mitochondrion"/>
    <property type="evidence" value="ECO:0000314"/>
    <property type="project" value="MGI"/>
</dbReference>
<dbReference type="GO" id="GO:0006915">
    <property type="term" value="P:apoptotic process"/>
    <property type="evidence" value="ECO:0000266"/>
    <property type="project" value="MGI"/>
</dbReference>
<dbReference type="GO" id="GO:0006974">
    <property type="term" value="P:DNA damage response"/>
    <property type="evidence" value="ECO:0000315"/>
    <property type="project" value="MGI"/>
</dbReference>
<dbReference type="GO" id="GO:0044346">
    <property type="term" value="P:fibroblast apoptotic process"/>
    <property type="evidence" value="ECO:0000315"/>
    <property type="project" value="MGI"/>
</dbReference>
<dbReference type="GO" id="GO:0072332">
    <property type="term" value="P:intrinsic apoptotic signaling pathway by p53 class mediator"/>
    <property type="evidence" value="ECO:0000315"/>
    <property type="project" value="UniProtKB"/>
</dbReference>
<dbReference type="GO" id="GO:0008630">
    <property type="term" value="P:intrinsic apoptotic signaling pathway in response to DNA damage"/>
    <property type="evidence" value="ECO:0000315"/>
    <property type="project" value="MGI"/>
</dbReference>
<dbReference type="GO" id="GO:0042771">
    <property type="term" value="P:intrinsic apoptotic signaling pathway in response to DNA damage by p53 class mediator"/>
    <property type="evidence" value="ECO:0000314"/>
    <property type="project" value="MGI"/>
</dbReference>
<dbReference type="GO" id="GO:0070059">
    <property type="term" value="P:intrinsic apoptotic signaling pathway in response to endoplasmic reticulum stress"/>
    <property type="evidence" value="ECO:0000315"/>
    <property type="project" value="ParkinsonsUK-UCL"/>
</dbReference>
<dbReference type="GO" id="GO:0048147">
    <property type="term" value="P:negative regulation of fibroblast proliferation"/>
    <property type="evidence" value="ECO:0000315"/>
    <property type="project" value="MGI"/>
</dbReference>
<dbReference type="GO" id="GO:0010917">
    <property type="term" value="P:negative regulation of mitochondrial membrane potential"/>
    <property type="evidence" value="ECO:0000314"/>
    <property type="project" value="UniProtKB"/>
</dbReference>
<dbReference type="GO" id="GO:0043065">
    <property type="term" value="P:positive regulation of apoptotic process"/>
    <property type="evidence" value="ECO:0000303"/>
    <property type="project" value="ComplexPortal"/>
</dbReference>
<dbReference type="GO" id="GO:0043517">
    <property type="term" value="P:positive regulation of DNA damage response, signal transduction by p53 class mediator"/>
    <property type="evidence" value="ECO:0000315"/>
    <property type="project" value="UniProtKB"/>
</dbReference>
<dbReference type="GO" id="GO:1903749">
    <property type="term" value="P:positive regulation of establishment of protein localization to mitochondrion"/>
    <property type="evidence" value="ECO:0000315"/>
    <property type="project" value="MGI"/>
</dbReference>
<dbReference type="GO" id="GO:2000271">
    <property type="term" value="P:positive regulation of fibroblast apoptotic process"/>
    <property type="evidence" value="ECO:0000315"/>
    <property type="project" value="MGI"/>
</dbReference>
<dbReference type="GO" id="GO:0043525">
    <property type="term" value="P:positive regulation of neuron apoptotic process"/>
    <property type="evidence" value="ECO:0000315"/>
    <property type="project" value="MGI"/>
</dbReference>
<dbReference type="GO" id="GO:0001836">
    <property type="term" value="P:release of cytochrome c from mitochondria"/>
    <property type="evidence" value="ECO:0000314"/>
    <property type="project" value="UniProtKB"/>
</dbReference>
<dbReference type="GO" id="GO:0009411">
    <property type="term" value="P:response to UV"/>
    <property type="evidence" value="ECO:0000315"/>
    <property type="project" value="MGI"/>
</dbReference>
<dbReference type="GO" id="GO:0010165">
    <property type="term" value="P:response to X-ray"/>
    <property type="evidence" value="ECO:0000315"/>
    <property type="project" value="MGI"/>
</dbReference>
<dbReference type="GO" id="GO:0043029">
    <property type="term" value="P:T cell homeostasis"/>
    <property type="evidence" value="ECO:0000315"/>
    <property type="project" value="UniProtKB"/>
</dbReference>
<dbReference type="DisProt" id="DP01281"/>
<dbReference type="InterPro" id="IPR024140">
    <property type="entry name" value="Noxa"/>
</dbReference>
<dbReference type="PANTHER" id="PTHR14299">
    <property type="entry name" value="PHORBOL-12-MYRISTATE-13-ACETATE-INDUCED PROTEIN 1"/>
    <property type="match status" value="1"/>
</dbReference>
<dbReference type="PANTHER" id="PTHR14299:SF0">
    <property type="entry name" value="PHORBOL-12-MYRISTATE-13-ACETATE-INDUCED PROTEIN 1"/>
    <property type="match status" value="1"/>
</dbReference>
<dbReference type="Pfam" id="PF15150">
    <property type="entry name" value="PMAIP1"/>
    <property type="match status" value="2"/>
</dbReference>
<protein>
    <recommendedName>
        <fullName>Phorbol-12-myristate-13-acetate-induced protein 1</fullName>
    </recommendedName>
    <alternativeName>
        <fullName>Protein Noxa</fullName>
    </alternativeName>
</protein>
<accession>Q9JM54</accession>